<protein>
    <recommendedName>
        <fullName>RuvB-like helicase 1</fullName>
        <ecNumber>3.6.4.12</ecNumber>
    </recommendedName>
    <alternativeName>
        <fullName>Dpontin</fullName>
        <shortName>Dpon</shortName>
    </alternativeName>
    <alternativeName>
        <fullName>Pontin</fullName>
    </alternativeName>
</protein>
<name>RUVB1_DROME</name>
<accession>Q9VH07</accession>
<accession>Q9NH53</accession>
<accession>Q9VH06</accession>
<comment type="function">
    <text evidence="4 6">Acts as a transcriptional coactivator in Wg signaling caused by altered arm signaling. Pont and rept interfere antagonistically with nuclear arm signaling function, and are required to enhance or reduce arm activity, respectively. Also an essential cofactor for the normal function of Myc; required for cellular proliferation and growth.</text>
</comment>
<comment type="function">
    <text evidence="1">Proposed core component of the chromatin remodeling Ino80 complex which is involved in transcriptional regulation, DNA replication and probably DNA repair.</text>
</comment>
<comment type="catalytic activity">
    <reaction>
        <text>ATP + H2O = ADP + phosphate + H(+)</text>
        <dbReference type="Rhea" id="RHEA:13065"/>
        <dbReference type="ChEBI" id="CHEBI:15377"/>
        <dbReference type="ChEBI" id="CHEBI:15378"/>
        <dbReference type="ChEBI" id="CHEBI:30616"/>
        <dbReference type="ChEBI" id="CHEBI:43474"/>
        <dbReference type="ChEBI" id="CHEBI:456216"/>
        <dbReference type="EC" id="3.6.4.12"/>
    </reaction>
</comment>
<comment type="subunit">
    <text evidence="1 6 7">Forms homohexameric rings. May form a dodecamer with rept made of two stacked hexameric rings (By similarity). Component of the chromatin remodeling Ino80 complex. Interacts with Myc and rept.</text>
</comment>
<comment type="interaction">
    <interactant intactId="EBI-234957">
        <id>Q9VH07</id>
    </interactant>
    <interactant intactId="EBI-120162">
        <id>Q9W4S7</id>
        <label>Myc</label>
    </interactant>
    <organismsDiffer>false</organismsDiffer>
    <experiments>4</experiments>
</comment>
<comment type="interaction">
    <interactant intactId="EBI-234957">
        <id>Q9VH07</id>
    </interactant>
    <interactant intactId="EBI-192924">
        <id>Q9V3K3</id>
        <label>rept</label>
    </interactant>
    <organismsDiffer>false</organismsDiffer>
    <experiments>6</experiments>
</comment>
<comment type="subcellular location">
    <subcellularLocation>
        <location evidence="4">Nucleus</location>
    </subcellularLocation>
</comment>
<comment type="tissue specificity">
    <text evidence="4">Higher expression occurs in primordia of mesoderm, anterior and posterior midgut and cephalic furrow early in gastrulation, as well as in endoderm and mesoderm lineages during germ band extension. Later in development expression is only maintained in endoderm cells. Expressed in thoracic and abdominal segment neural precursors of all embryonic chordotonal organs.</text>
</comment>
<comment type="developmental stage">
    <text evidence="4">Expressed both maternally and zygotically.</text>
</comment>
<comment type="disruption phenotype">
    <text evidence="4">Death at first larval instar.</text>
</comment>
<comment type="similarity">
    <text evidence="8">Belongs to the RuvB family.</text>
</comment>
<dbReference type="EC" id="3.6.4.12"/>
<dbReference type="EMBL" id="AF233278">
    <property type="protein sequence ID" value="AAF43411.1"/>
    <property type="molecule type" value="Genomic_DNA"/>
</dbReference>
<dbReference type="EMBL" id="AE014297">
    <property type="protein sequence ID" value="AAF54514.1"/>
    <property type="molecule type" value="Genomic_DNA"/>
</dbReference>
<dbReference type="EMBL" id="AY061095">
    <property type="protein sequence ID" value="AAL28643.1"/>
    <property type="molecule type" value="mRNA"/>
</dbReference>
<dbReference type="RefSeq" id="NP_652608.1">
    <property type="nucleotide sequence ID" value="NM_144351.4"/>
</dbReference>
<dbReference type="SMR" id="Q9VH07"/>
<dbReference type="BioGRID" id="72727">
    <property type="interactions" value="47"/>
</dbReference>
<dbReference type="ComplexPortal" id="CPX-2264">
    <property type="entry name" value="NuA4 histone acetyltransferase complex"/>
</dbReference>
<dbReference type="ComplexPortal" id="CPX-2423">
    <property type="entry name" value="SWR1 chromatin remodelling complex"/>
</dbReference>
<dbReference type="ComplexPortal" id="CPX-2693">
    <property type="entry name" value="INO80 chromatin remodeling complex"/>
</dbReference>
<dbReference type="FunCoup" id="Q9VH07">
    <property type="interactions" value="1879"/>
</dbReference>
<dbReference type="IntAct" id="Q9VH07">
    <property type="interactions" value="35"/>
</dbReference>
<dbReference type="MINT" id="Q9VH07"/>
<dbReference type="STRING" id="7227.FBpp0081704"/>
<dbReference type="PaxDb" id="7227-FBpp0081704"/>
<dbReference type="EnsemblMetazoa" id="FBtr0082226">
    <property type="protein sequence ID" value="FBpp0081704"/>
    <property type="gene ID" value="FBgn0040078"/>
</dbReference>
<dbReference type="GeneID" id="53439"/>
<dbReference type="KEGG" id="dme:Dmel_CG4003"/>
<dbReference type="UCSC" id="CG4003-RA">
    <property type="organism name" value="d. melanogaster"/>
</dbReference>
<dbReference type="AGR" id="FB:FBgn0040078"/>
<dbReference type="CTD" id="53439"/>
<dbReference type="FlyBase" id="FBgn0040078">
    <property type="gene designation" value="pont"/>
</dbReference>
<dbReference type="VEuPathDB" id="VectorBase:FBgn0040078"/>
<dbReference type="eggNOG" id="KOG1942">
    <property type="taxonomic scope" value="Eukaryota"/>
</dbReference>
<dbReference type="GeneTree" id="ENSGT00940000153556"/>
<dbReference type="HOGENOM" id="CLU_028311_1_1_1"/>
<dbReference type="InParanoid" id="Q9VH07"/>
<dbReference type="OMA" id="RTLPYNK"/>
<dbReference type="OrthoDB" id="10060499at2759"/>
<dbReference type="PhylomeDB" id="Q9VH07"/>
<dbReference type="Reactome" id="R-DME-201722">
    <property type="pathway name" value="Formation of the beta-catenin:TCF transactivating complex"/>
</dbReference>
<dbReference type="Reactome" id="R-DME-5689603">
    <property type="pathway name" value="UCH proteinases"/>
</dbReference>
<dbReference type="Reactome" id="R-DME-5689880">
    <property type="pathway name" value="Ub-specific processing proteases"/>
</dbReference>
<dbReference type="Reactome" id="R-DME-5696394">
    <property type="pathway name" value="DNA Damage Recognition in GG-NER"/>
</dbReference>
<dbReference type="SignaLink" id="Q9VH07"/>
<dbReference type="BioGRID-ORCS" id="53439">
    <property type="hits" value="0 hits in 1 CRISPR screen"/>
</dbReference>
<dbReference type="GenomeRNAi" id="53439"/>
<dbReference type="PRO" id="PR:Q9VH07"/>
<dbReference type="Proteomes" id="UP000000803">
    <property type="component" value="Chromosome 3R"/>
</dbReference>
<dbReference type="Bgee" id="FBgn0040078">
    <property type="expression patterns" value="Expressed in early elongation stage spermatid (Drosophila) in testis and 102 other cell types or tissues"/>
</dbReference>
<dbReference type="GO" id="GO:0035060">
    <property type="term" value="C:brahma complex"/>
    <property type="evidence" value="ECO:0000314"/>
    <property type="project" value="FlyBase"/>
</dbReference>
<dbReference type="GO" id="GO:0031011">
    <property type="term" value="C:Ino80 complex"/>
    <property type="evidence" value="ECO:0000314"/>
    <property type="project" value="FlyBase"/>
</dbReference>
<dbReference type="GO" id="GO:0035267">
    <property type="term" value="C:NuA4 histone acetyltransferase complex"/>
    <property type="evidence" value="ECO:0000314"/>
    <property type="project" value="UniProtKB"/>
</dbReference>
<dbReference type="GO" id="GO:0005634">
    <property type="term" value="C:nucleus"/>
    <property type="evidence" value="ECO:0000314"/>
    <property type="project" value="UniProtKB"/>
</dbReference>
<dbReference type="GO" id="GO:0097255">
    <property type="term" value="C:R2TP complex"/>
    <property type="evidence" value="ECO:0000314"/>
    <property type="project" value="FlyBase"/>
</dbReference>
<dbReference type="GO" id="GO:0000812">
    <property type="term" value="C:Swr1 complex"/>
    <property type="evidence" value="ECO:0000318"/>
    <property type="project" value="GO_Central"/>
</dbReference>
<dbReference type="GO" id="GO:0005524">
    <property type="term" value="F:ATP binding"/>
    <property type="evidence" value="ECO:0007669"/>
    <property type="project" value="UniProtKB-KW"/>
</dbReference>
<dbReference type="GO" id="GO:0016887">
    <property type="term" value="F:ATP hydrolysis activity"/>
    <property type="evidence" value="ECO:0007669"/>
    <property type="project" value="InterPro"/>
</dbReference>
<dbReference type="GO" id="GO:0003678">
    <property type="term" value="F:DNA helicase activity"/>
    <property type="evidence" value="ECO:0000318"/>
    <property type="project" value="GO_Central"/>
</dbReference>
<dbReference type="GO" id="GO:0003713">
    <property type="term" value="F:transcription coactivator activity"/>
    <property type="evidence" value="ECO:0000315"/>
    <property type="project" value="UniProtKB"/>
</dbReference>
<dbReference type="GO" id="GO:0000492">
    <property type="term" value="P:box C/D snoRNP assembly"/>
    <property type="evidence" value="ECO:0000318"/>
    <property type="project" value="GO_Central"/>
</dbReference>
<dbReference type="GO" id="GO:0051301">
    <property type="term" value="P:cell division"/>
    <property type="evidence" value="ECO:0007669"/>
    <property type="project" value="UniProtKB-KW"/>
</dbReference>
<dbReference type="GO" id="GO:0006338">
    <property type="term" value="P:chromatin remodeling"/>
    <property type="evidence" value="ECO:0000318"/>
    <property type="project" value="GO_Central"/>
</dbReference>
<dbReference type="GO" id="GO:0006310">
    <property type="term" value="P:DNA recombination"/>
    <property type="evidence" value="ECO:0007669"/>
    <property type="project" value="UniProtKB-KW"/>
</dbReference>
<dbReference type="GO" id="GO:0006281">
    <property type="term" value="P:DNA repair"/>
    <property type="evidence" value="ECO:0007669"/>
    <property type="project" value="UniProtKB-KW"/>
</dbReference>
<dbReference type="GO" id="GO:0140861">
    <property type="term" value="P:DNA repair-dependent chromatin remodeling"/>
    <property type="evidence" value="ECO:0000314"/>
    <property type="project" value="FlyBase"/>
</dbReference>
<dbReference type="GO" id="GO:0090307">
    <property type="term" value="P:mitotic spindle assembly"/>
    <property type="evidence" value="ECO:0000315"/>
    <property type="project" value="FlyBase"/>
</dbReference>
<dbReference type="GO" id="GO:0046329">
    <property type="term" value="P:negative regulation of JNK cascade"/>
    <property type="evidence" value="ECO:0000315"/>
    <property type="project" value="FlyBase"/>
</dbReference>
<dbReference type="GO" id="GO:0043069">
    <property type="term" value="P:negative regulation of programmed cell death"/>
    <property type="evidence" value="ECO:0000316"/>
    <property type="project" value="FlyBase"/>
</dbReference>
<dbReference type="GO" id="GO:0010804">
    <property type="term" value="P:negative regulation of tumor necrosis factor-mediated signaling pathway"/>
    <property type="evidence" value="ECO:0000316"/>
    <property type="project" value="FlyBase"/>
</dbReference>
<dbReference type="GO" id="GO:0090263">
    <property type="term" value="P:positive regulation of canonical Wnt signaling pathway"/>
    <property type="evidence" value="ECO:0000315"/>
    <property type="project" value="UniProtKB"/>
</dbReference>
<dbReference type="GO" id="GO:0010628">
    <property type="term" value="P:positive regulation of gene expression"/>
    <property type="evidence" value="ECO:0000315"/>
    <property type="project" value="FlyBase"/>
</dbReference>
<dbReference type="GO" id="GO:0042127">
    <property type="term" value="P:regulation of cell population proliferation"/>
    <property type="evidence" value="ECO:0000315"/>
    <property type="project" value="UniProtKB"/>
</dbReference>
<dbReference type="GO" id="GO:0006357">
    <property type="term" value="P:regulation of transcription by RNA polymerase II"/>
    <property type="evidence" value="ECO:0000318"/>
    <property type="project" value="GO_Central"/>
</dbReference>
<dbReference type="FunFam" id="1.10.8.60:FF:000010">
    <property type="entry name" value="RuvB-like helicase"/>
    <property type="match status" value="1"/>
</dbReference>
<dbReference type="FunFam" id="2.40.50.360:FF:000001">
    <property type="entry name" value="RuvB-like helicase"/>
    <property type="match status" value="1"/>
</dbReference>
<dbReference type="Gene3D" id="1.10.8.60">
    <property type="match status" value="1"/>
</dbReference>
<dbReference type="Gene3D" id="3.40.50.300">
    <property type="entry name" value="P-loop containing nucleotide triphosphate hydrolases"/>
    <property type="match status" value="1"/>
</dbReference>
<dbReference type="Gene3D" id="2.40.50.360">
    <property type="entry name" value="RuvB-like helicase, domain II"/>
    <property type="match status" value="1"/>
</dbReference>
<dbReference type="InterPro" id="IPR003593">
    <property type="entry name" value="AAA+_ATPase"/>
</dbReference>
<dbReference type="InterPro" id="IPR027417">
    <property type="entry name" value="P-loop_NTPase"/>
</dbReference>
<dbReference type="InterPro" id="IPR027238">
    <property type="entry name" value="RuvB-like"/>
</dbReference>
<dbReference type="InterPro" id="IPR041048">
    <property type="entry name" value="RuvB-like_C"/>
</dbReference>
<dbReference type="InterPro" id="IPR042487">
    <property type="entry name" value="RuvBL1/2_DNA/RNA_bd_dom"/>
</dbReference>
<dbReference type="InterPro" id="IPR010339">
    <property type="entry name" value="TIP49_P-loop"/>
</dbReference>
<dbReference type="PANTHER" id="PTHR11093">
    <property type="entry name" value="RUVB-RELATED REPTIN AND PONTIN"/>
    <property type="match status" value="1"/>
</dbReference>
<dbReference type="Pfam" id="PF06068">
    <property type="entry name" value="TIP49"/>
    <property type="match status" value="1"/>
</dbReference>
<dbReference type="Pfam" id="PF17856">
    <property type="entry name" value="TIP49_C"/>
    <property type="match status" value="1"/>
</dbReference>
<dbReference type="SMART" id="SM00382">
    <property type="entry name" value="AAA"/>
    <property type="match status" value="1"/>
</dbReference>
<dbReference type="SUPFAM" id="SSF52540">
    <property type="entry name" value="P-loop containing nucleoside triphosphate hydrolases"/>
    <property type="match status" value="1"/>
</dbReference>
<evidence type="ECO:0000250" key="1"/>
<evidence type="ECO:0000250" key="2">
    <source>
        <dbReference type="UniProtKB" id="Q9Y230"/>
    </source>
</evidence>
<evidence type="ECO:0000269" key="3">
    <source>
    </source>
</evidence>
<evidence type="ECO:0000269" key="4">
    <source>
    </source>
</evidence>
<evidence type="ECO:0000269" key="5">
    <source>
    </source>
</evidence>
<evidence type="ECO:0000269" key="6">
    <source>
    </source>
</evidence>
<evidence type="ECO:0000269" key="7">
    <source>
    </source>
</evidence>
<evidence type="ECO:0000305" key="8"/>
<evidence type="ECO:0000312" key="9">
    <source>
        <dbReference type="EMBL" id="AAF43411.1"/>
    </source>
</evidence>
<evidence type="ECO:0000312" key="10">
    <source>
        <dbReference type="EMBL" id="AAF54514.1"/>
    </source>
</evidence>
<evidence type="ECO:0000312" key="11">
    <source>
        <dbReference type="EMBL" id="AAL28643.1"/>
    </source>
</evidence>
<evidence type="ECO:0000312" key="12">
    <source>
        <dbReference type="FlyBase" id="FBgn0040078"/>
    </source>
</evidence>
<gene>
    <name evidence="10 12" type="primary">pont</name>
    <name type="ORF">CG4003</name>
</gene>
<organism>
    <name type="scientific">Drosophila melanogaster</name>
    <name type="common">Fruit fly</name>
    <dbReference type="NCBI Taxonomy" id="7227"/>
    <lineage>
        <taxon>Eukaryota</taxon>
        <taxon>Metazoa</taxon>
        <taxon>Ecdysozoa</taxon>
        <taxon>Arthropoda</taxon>
        <taxon>Hexapoda</taxon>
        <taxon>Insecta</taxon>
        <taxon>Pterygota</taxon>
        <taxon>Neoptera</taxon>
        <taxon>Endopterygota</taxon>
        <taxon>Diptera</taxon>
        <taxon>Brachycera</taxon>
        <taxon>Muscomorpha</taxon>
        <taxon>Ephydroidea</taxon>
        <taxon>Drosophilidae</taxon>
        <taxon>Drosophila</taxon>
        <taxon>Sophophora</taxon>
    </lineage>
</organism>
<feature type="chain" id="PRO_0000306320" description="RuvB-like helicase 1">
    <location>
        <begin position="1"/>
        <end position="456"/>
    </location>
</feature>
<feature type="binding site" evidence="2">
    <location>
        <begin position="70"/>
        <end position="77"/>
    </location>
    <ligand>
        <name>ATP</name>
        <dbReference type="ChEBI" id="CHEBI:30616"/>
    </ligand>
</feature>
<feature type="sequence conflict" description="In Ref. 1; AAF43411." evidence="8" ref="1">
    <original>P</original>
    <variation>A</variation>
    <location>
        <position position="71"/>
    </location>
</feature>
<feature type="sequence conflict" description="In Ref. 1; AAF43411." evidence="8" ref="1">
    <original>E</original>
    <variation>K</variation>
    <location>
        <position position="310"/>
    </location>
</feature>
<sequence length="456" mass="50242">MKIEEVKSTVRTQRIAAHSHVKGLGLDEVGAAVHSAAGLVGQKAAREAAGIVVDLIKSKKMAGRALLLAGPPGTGKTAIALAIAQELGNKVPFCPMVGSEVFSNEIKKTEVLMENFRRSIGLRIRETKEVYEGEVTELTPVETENPMGGYGKTISNVVIGLKTAKGTKQLKLDPSIFDALQKEKVEVGDVIYIEANSGAVKRQGRSDTFATEFDLETEEYVPLPKGDVHKKKEVIQDVTLHDLDVANARPQGGQDVLSMMGQLMKPKKTEITDKLRMEINKVVNKYIDQGIAELVPGVLFIDEIHMLDLETFTYLHKSLESPIAPIVIFATNRGRCVIRGTTDIVSPHGIPLDLLDRLLIIRTLLYSTADMEQIIKLRAQTEGLQLEENAFTRLSEIGTSSTLRYAVQLLTPAHQMCKVNGRNQISKDDIEDVHSLFLDAKRSSKHLSEKNNKFML</sequence>
<reference evidence="8 9" key="1">
    <citation type="journal article" date="2000" name="EMBO J.">
        <title>Pontin52 and reptin52 function as antagonistic regulators of beta-catenin signalling activity.</title>
        <authorList>
            <person name="Bauer A."/>
            <person name="Chauvet S."/>
            <person name="Huber O."/>
            <person name="Usseglio F."/>
            <person name="Rothbaecher U."/>
            <person name="Aragnol D."/>
            <person name="Kemler R."/>
            <person name="Pradel J."/>
        </authorList>
    </citation>
    <scope>NUCLEOTIDE SEQUENCE [GENOMIC DNA]</scope>
    <scope>FUNCTION</scope>
    <scope>SUBCELLULAR LOCATION</scope>
    <scope>TISSUE SPECIFICITY</scope>
    <scope>DEVELOPMENTAL STAGE</scope>
    <scope>DISRUPTION PHENOTYPE</scope>
</reference>
<reference evidence="10" key="2">
    <citation type="journal article" date="2000" name="Science">
        <title>The genome sequence of Drosophila melanogaster.</title>
        <authorList>
            <person name="Adams M.D."/>
            <person name="Celniker S.E."/>
            <person name="Holt R.A."/>
            <person name="Evans C.A."/>
            <person name="Gocayne J.D."/>
            <person name="Amanatides P.G."/>
            <person name="Scherer S.E."/>
            <person name="Li P.W."/>
            <person name="Hoskins R.A."/>
            <person name="Galle R.F."/>
            <person name="George R.A."/>
            <person name="Lewis S.E."/>
            <person name="Richards S."/>
            <person name="Ashburner M."/>
            <person name="Henderson S.N."/>
            <person name="Sutton G.G."/>
            <person name="Wortman J.R."/>
            <person name="Yandell M.D."/>
            <person name="Zhang Q."/>
            <person name="Chen L.X."/>
            <person name="Brandon R.C."/>
            <person name="Rogers Y.-H.C."/>
            <person name="Blazej R.G."/>
            <person name="Champe M."/>
            <person name="Pfeiffer B.D."/>
            <person name="Wan K.H."/>
            <person name="Doyle C."/>
            <person name="Baxter E.G."/>
            <person name="Helt G."/>
            <person name="Nelson C.R."/>
            <person name="Miklos G.L.G."/>
            <person name="Abril J.F."/>
            <person name="Agbayani A."/>
            <person name="An H.-J."/>
            <person name="Andrews-Pfannkoch C."/>
            <person name="Baldwin D."/>
            <person name="Ballew R.M."/>
            <person name="Basu A."/>
            <person name="Baxendale J."/>
            <person name="Bayraktaroglu L."/>
            <person name="Beasley E.M."/>
            <person name="Beeson K.Y."/>
            <person name="Benos P.V."/>
            <person name="Berman B.P."/>
            <person name="Bhandari D."/>
            <person name="Bolshakov S."/>
            <person name="Borkova D."/>
            <person name="Botchan M.R."/>
            <person name="Bouck J."/>
            <person name="Brokstein P."/>
            <person name="Brottier P."/>
            <person name="Burtis K.C."/>
            <person name="Busam D.A."/>
            <person name="Butler H."/>
            <person name="Cadieu E."/>
            <person name="Center A."/>
            <person name="Chandra I."/>
            <person name="Cherry J.M."/>
            <person name="Cawley S."/>
            <person name="Dahlke C."/>
            <person name="Davenport L.B."/>
            <person name="Davies P."/>
            <person name="de Pablos B."/>
            <person name="Delcher A."/>
            <person name="Deng Z."/>
            <person name="Mays A.D."/>
            <person name="Dew I."/>
            <person name="Dietz S.M."/>
            <person name="Dodson K."/>
            <person name="Doup L.E."/>
            <person name="Downes M."/>
            <person name="Dugan-Rocha S."/>
            <person name="Dunkov B.C."/>
            <person name="Dunn P."/>
            <person name="Durbin K.J."/>
            <person name="Evangelista C.C."/>
            <person name="Ferraz C."/>
            <person name="Ferriera S."/>
            <person name="Fleischmann W."/>
            <person name="Fosler C."/>
            <person name="Gabrielian A.E."/>
            <person name="Garg N.S."/>
            <person name="Gelbart W.M."/>
            <person name="Glasser K."/>
            <person name="Glodek A."/>
            <person name="Gong F."/>
            <person name="Gorrell J.H."/>
            <person name="Gu Z."/>
            <person name="Guan P."/>
            <person name="Harris M."/>
            <person name="Harris N.L."/>
            <person name="Harvey D.A."/>
            <person name="Heiman T.J."/>
            <person name="Hernandez J.R."/>
            <person name="Houck J."/>
            <person name="Hostin D."/>
            <person name="Houston K.A."/>
            <person name="Howland T.J."/>
            <person name="Wei M.-H."/>
            <person name="Ibegwam C."/>
            <person name="Jalali M."/>
            <person name="Kalush F."/>
            <person name="Karpen G.H."/>
            <person name="Ke Z."/>
            <person name="Kennison J.A."/>
            <person name="Ketchum K.A."/>
            <person name="Kimmel B.E."/>
            <person name="Kodira C.D."/>
            <person name="Kraft C.L."/>
            <person name="Kravitz S."/>
            <person name="Kulp D."/>
            <person name="Lai Z."/>
            <person name="Lasko P."/>
            <person name="Lei Y."/>
            <person name="Levitsky A.A."/>
            <person name="Li J.H."/>
            <person name="Li Z."/>
            <person name="Liang Y."/>
            <person name="Lin X."/>
            <person name="Liu X."/>
            <person name="Mattei B."/>
            <person name="McIntosh T.C."/>
            <person name="McLeod M.P."/>
            <person name="McPherson D."/>
            <person name="Merkulov G."/>
            <person name="Milshina N.V."/>
            <person name="Mobarry C."/>
            <person name="Morris J."/>
            <person name="Moshrefi A."/>
            <person name="Mount S.M."/>
            <person name="Moy M."/>
            <person name="Murphy B."/>
            <person name="Murphy L."/>
            <person name="Muzny D.M."/>
            <person name="Nelson D.L."/>
            <person name="Nelson D.R."/>
            <person name="Nelson K.A."/>
            <person name="Nixon K."/>
            <person name="Nusskern D.R."/>
            <person name="Pacleb J.M."/>
            <person name="Palazzolo M."/>
            <person name="Pittman G.S."/>
            <person name="Pan S."/>
            <person name="Pollard J."/>
            <person name="Puri V."/>
            <person name="Reese M.G."/>
            <person name="Reinert K."/>
            <person name="Remington K."/>
            <person name="Saunders R.D.C."/>
            <person name="Scheeler F."/>
            <person name="Shen H."/>
            <person name="Shue B.C."/>
            <person name="Siden-Kiamos I."/>
            <person name="Simpson M."/>
            <person name="Skupski M.P."/>
            <person name="Smith T.J."/>
            <person name="Spier E."/>
            <person name="Spradling A.C."/>
            <person name="Stapleton M."/>
            <person name="Strong R."/>
            <person name="Sun E."/>
            <person name="Svirskas R."/>
            <person name="Tector C."/>
            <person name="Turner R."/>
            <person name="Venter E."/>
            <person name="Wang A.H."/>
            <person name="Wang X."/>
            <person name="Wang Z.-Y."/>
            <person name="Wassarman D.A."/>
            <person name="Weinstock G.M."/>
            <person name="Weissenbach J."/>
            <person name="Williams S.M."/>
            <person name="Woodage T."/>
            <person name="Worley K.C."/>
            <person name="Wu D."/>
            <person name="Yang S."/>
            <person name="Yao Q.A."/>
            <person name="Ye J."/>
            <person name="Yeh R.-F."/>
            <person name="Zaveri J.S."/>
            <person name="Zhan M."/>
            <person name="Zhang G."/>
            <person name="Zhao Q."/>
            <person name="Zheng L."/>
            <person name="Zheng X.H."/>
            <person name="Zhong F.N."/>
            <person name="Zhong W."/>
            <person name="Zhou X."/>
            <person name="Zhu S.C."/>
            <person name="Zhu X."/>
            <person name="Smith H.O."/>
            <person name="Gibbs R.A."/>
            <person name="Myers E.W."/>
            <person name="Rubin G.M."/>
            <person name="Venter J.C."/>
        </authorList>
    </citation>
    <scope>NUCLEOTIDE SEQUENCE [LARGE SCALE GENOMIC DNA]</scope>
    <source>
        <strain evidence="3">Berkeley</strain>
    </source>
</reference>
<reference evidence="8 10" key="3">
    <citation type="journal article" date="2002" name="Genome Biol.">
        <title>Annotation of the Drosophila melanogaster euchromatic genome: a systematic review.</title>
        <authorList>
            <person name="Misra S."/>
            <person name="Crosby M.A."/>
            <person name="Mungall C.J."/>
            <person name="Matthews B.B."/>
            <person name="Campbell K.S."/>
            <person name="Hradecky P."/>
            <person name="Huang Y."/>
            <person name="Kaminker J.S."/>
            <person name="Millburn G.H."/>
            <person name="Prochnik S.E."/>
            <person name="Smith C.D."/>
            <person name="Tupy J.L."/>
            <person name="Whitfield E.J."/>
            <person name="Bayraktaroglu L."/>
            <person name="Berman B.P."/>
            <person name="Bettencourt B.R."/>
            <person name="Celniker S.E."/>
            <person name="de Grey A.D.N.J."/>
            <person name="Drysdale R.A."/>
            <person name="Harris N.L."/>
            <person name="Richter J."/>
            <person name="Russo S."/>
            <person name="Schroeder A.J."/>
            <person name="Shu S.Q."/>
            <person name="Stapleton M."/>
            <person name="Yamada C."/>
            <person name="Ashburner M."/>
            <person name="Gelbart W.M."/>
            <person name="Rubin G.M."/>
            <person name="Lewis S.E."/>
        </authorList>
    </citation>
    <scope>GENOME REANNOTATION</scope>
    <source>
        <strain>Berkeley</strain>
    </source>
</reference>
<reference evidence="11" key="4">
    <citation type="journal article" date="2002" name="Genome Biol.">
        <title>A Drosophila full-length cDNA resource.</title>
        <authorList>
            <person name="Stapleton M."/>
            <person name="Carlson J.W."/>
            <person name="Brokstein P."/>
            <person name="Yu C."/>
            <person name="Champe M."/>
            <person name="George R.A."/>
            <person name="Guarin H."/>
            <person name="Kronmiller B."/>
            <person name="Pacleb J.M."/>
            <person name="Park S."/>
            <person name="Wan K.H."/>
            <person name="Rubin G.M."/>
            <person name="Celniker S.E."/>
        </authorList>
    </citation>
    <scope>NUCLEOTIDE SEQUENCE [LARGE SCALE MRNA]</scope>
    <source>
        <strain evidence="11">Berkeley</strain>
        <tissue evidence="5">Embryo</tissue>
    </source>
</reference>
<reference evidence="8" key="5">
    <citation type="journal article" date="2005" name="Proc. Natl. Acad. Sci. U.S.A.">
        <title>Myc interacts genetically with Tip48/Reptin and Tip49/Pontin to control growth and proliferation during Drosophila development.</title>
        <authorList>
            <person name="Bellosta P."/>
            <person name="Hulf T."/>
            <person name="Balla Diop S."/>
            <person name="Usseglio F."/>
            <person name="Pradel J."/>
            <person name="Aragnol D."/>
            <person name="Gallant P."/>
        </authorList>
    </citation>
    <scope>FUNCTION</scope>
    <scope>INTERACTION WITH MYC AND REPT</scope>
</reference>
<reference evidence="8" key="6">
    <citation type="journal article" date="2006" name="Genes Dev.">
        <title>A Polycomb group protein complex with sequence-specific DNA-binding and selective methyl-lysine-binding activities.</title>
        <authorList>
            <person name="Klymenko T."/>
            <person name="Papp B."/>
            <person name="Fischle W."/>
            <person name="Koecher T."/>
            <person name="Schelder M."/>
            <person name="Fritsch C."/>
            <person name="Wild B."/>
            <person name="Wilm M."/>
            <person name="Mueller J."/>
        </authorList>
    </citation>
    <scope>IDENTIFICATION IN THE INO80 COMPLEX</scope>
    <source>
        <tissue evidence="7">Embryo</tissue>
    </source>
</reference>
<keyword id="KW-0010">Activator</keyword>
<keyword id="KW-0067">ATP-binding</keyword>
<keyword id="KW-0131">Cell cycle</keyword>
<keyword id="KW-0132">Cell division</keyword>
<keyword id="KW-0156">Chromatin regulator</keyword>
<keyword id="KW-0227">DNA damage</keyword>
<keyword id="KW-0233">DNA recombination</keyword>
<keyword id="KW-0234">DNA repair</keyword>
<keyword id="KW-0347">Helicase</keyword>
<keyword id="KW-0378">Hydrolase</keyword>
<keyword id="KW-0547">Nucleotide-binding</keyword>
<keyword id="KW-0539">Nucleus</keyword>
<keyword id="KW-1185">Reference proteome</keyword>
<keyword id="KW-0804">Transcription</keyword>
<keyword id="KW-0805">Transcription regulation</keyword>
<proteinExistence type="evidence at protein level"/>